<protein>
    <recommendedName>
        <fullName>Tachykinin-4</fullName>
    </recommendedName>
    <alternativeName>
        <fullName>Preprotachykinin-C</fullName>
        <shortName>PPT-C</shortName>
    </alternativeName>
    <component>
        <recommendedName>
            <fullName>Hemokinin</fullName>
        </recommendedName>
        <alternativeName>
            <fullName>HK1</fullName>
        </alternativeName>
        <alternativeName>
            <fullName>Hemokinin-1</fullName>
        </alternativeName>
        <alternativeName>
            <fullName>Hemokinin-I</fullName>
            <shortName>HK-I</shortName>
        </alternativeName>
    </component>
</protein>
<sequence>MLPLLALLLLIGPSVCTTAGDREELAFGAEAESWVTVNLKGIPVPSIELKLQELKRSRTRQFYGLMGKRVGGYQLGRIVQDLLGTRGLSIEGTCRQAASQQRARPGAVTRESLQSREEDEAPLTTSNV</sequence>
<evidence type="ECO:0000250" key="1"/>
<evidence type="ECO:0000255" key="2"/>
<evidence type="ECO:0000256" key="3">
    <source>
        <dbReference type="SAM" id="MobiDB-lite"/>
    </source>
</evidence>
<evidence type="ECO:0000269" key="4">
    <source>
    </source>
</evidence>
<evidence type="ECO:0000269" key="5">
    <source>
    </source>
</evidence>
<evidence type="ECO:0000269" key="6">
    <source>
    </source>
</evidence>
<evidence type="ECO:0000269" key="7">
    <source>
    </source>
</evidence>
<evidence type="ECO:0000269" key="8">
    <source>
    </source>
</evidence>
<evidence type="ECO:0000269" key="9">
    <source>
    </source>
</evidence>
<evidence type="ECO:0000269" key="10">
    <source>
    </source>
</evidence>
<evidence type="ECO:0000269" key="11">
    <source>
    </source>
</evidence>
<evidence type="ECO:0000269" key="12">
    <source>
    </source>
</evidence>
<evidence type="ECO:0000269" key="13">
    <source>
    </source>
</evidence>
<evidence type="ECO:0000269" key="14">
    <source>
    </source>
</evidence>
<evidence type="ECO:0000269" key="15">
    <source>
    </source>
</evidence>
<evidence type="ECO:0000303" key="16">
    <source>
    </source>
</evidence>
<evidence type="ECO:0000305" key="17"/>
<evidence type="ECO:0000312" key="18">
    <source>
        <dbReference type="EMBL" id="AAI19427.1"/>
    </source>
</evidence>
<evidence type="ECO:0000312" key="19">
    <source>
        <dbReference type="EMBL" id="AAK15025.1"/>
    </source>
</evidence>
<evidence type="ECO:0000312" key="20">
    <source>
        <dbReference type="EMBL" id="AAP30873.1"/>
    </source>
</evidence>
<evidence type="ECO:0000312" key="21">
    <source>
        <dbReference type="MGI" id="MGI:1931130"/>
    </source>
</evidence>
<comment type="function">
    <text evidence="4 5 6 7 10 11 14 15">Tachykinins are active peptides which excite neurons, evoke behavioral responses, are potent vasodilators and secretagogues, and contract (directly or indirectly) many smooth muscles. Hemokinin induces plasma extravasation, mast cell degranulation, muscle contraction, salivary secretion and scratching behavior. Increases sperm motility. Induces potent analgesic effects and may play a role in pain modulation. Promotes survival of bone marrow B lineage cells and of cultured LPS-stimulated pre-B cells and may act as an autocrine factor required for B-cell survival and proliferation. Lowers systemic arterial pressure following intravenous injection. Induces interferon-gamma production and may play a role in the inflammatory response. Shows potent affinity and specificity for the NK-1 receptor.</text>
</comment>
<comment type="subcellular location">
    <subcellularLocation>
        <location evidence="17">Secreted</location>
    </subcellularLocation>
</comment>
<comment type="tissue specificity">
    <text evidence="4 8 9 10 11 12 13">Expressed in hematopoietic cells with highest levels in pre- and pro-B cells but not in later developmental stages. Also detected in uterus, skeletal muscle, brain, spleen, stomach, skin and lactating mammary gland and in cells of myeloid lineage including dendritic and microglial cells and macrophages. In uterus, highest expression is observed in non-pregnant diestrus mice and in day 5 pregnant mice. Compared with mice in diestrus, decreases 2.6-fold in uteri from non-pregnant mice in estrus and 10.2-fold in day 17 pregnant mice. Detected at sites of chronic inflammation such as granulomas.</text>
</comment>
<comment type="similarity">
    <text evidence="2">Belongs to the tachykinin family.</text>
</comment>
<name>TKN4_MOUSE</name>
<gene>
    <name evidence="21" type="primary">Tac4</name>
</gene>
<accession>Q99N14</accession>
<keyword id="KW-0027">Amidation</keyword>
<keyword id="KW-0165">Cleavage on pair of basic residues</keyword>
<keyword id="KW-0382">Hypotensive agent</keyword>
<keyword id="KW-0467">Mast cell degranulation</keyword>
<keyword id="KW-1185">Reference proteome</keyword>
<keyword id="KW-0964">Secreted</keyword>
<keyword id="KW-0732">Signal</keyword>
<organism>
    <name type="scientific">Mus musculus</name>
    <name type="common">Mouse</name>
    <dbReference type="NCBI Taxonomy" id="10090"/>
    <lineage>
        <taxon>Eukaryota</taxon>
        <taxon>Metazoa</taxon>
        <taxon>Chordata</taxon>
        <taxon>Craniata</taxon>
        <taxon>Vertebrata</taxon>
        <taxon>Euteleostomi</taxon>
        <taxon>Mammalia</taxon>
        <taxon>Eutheria</taxon>
        <taxon>Euarchontoglires</taxon>
        <taxon>Glires</taxon>
        <taxon>Rodentia</taxon>
        <taxon>Myomorpha</taxon>
        <taxon>Muroidea</taxon>
        <taxon>Muridae</taxon>
        <taxon>Murinae</taxon>
        <taxon>Mus</taxon>
        <taxon>Mus</taxon>
    </lineage>
</organism>
<proteinExistence type="evidence at protein level"/>
<dbReference type="EMBL" id="AF235035">
    <property type="protein sequence ID" value="AAK15025.1"/>
    <property type="molecule type" value="mRNA"/>
</dbReference>
<dbReference type="EMBL" id="AF515827">
    <property type="protein sequence ID" value="AAP30873.1"/>
    <property type="molecule type" value="mRNA"/>
</dbReference>
<dbReference type="EMBL" id="AL627222">
    <property type="status" value="NOT_ANNOTATED_CDS"/>
    <property type="molecule type" value="Genomic_DNA"/>
</dbReference>
<dbReference type="EMBL" id="BC119426">
    <property type="protein sequence ID" value="AAI19427.1"/>
    <property type="molecule type" value="mRNA"/>
</dbReference>
<dbReference type="CCDS" id="CCDS25274.1"/>
<dbReference type="RefSeq" id="NP_444323.1">
    <property type="nucleotide sequence ID" value="NM_053093.2"/>
</dbReference>
<dbReference type="SMR" id="Q99N14"/>
<dbReference type="FunCoup" id="Q99N14">
    <property type="interactions" value="607"/>
</dbReference>
<dbReference type="STRING" id="10090.ENSMUSP00000021242"/>
<dbReference type="PaxDb" id="10090-ENSMUSP00000021242"/>
<dbReference type="Antibodypedia" id="68331">
    <property type="antibodies" value="58 antibodies from 11 providers"/>
</dbReference>
<dbReference type="DNASU" id="93670"/>
<dbReference type="Ensembl" id="ENSMUST00000021242.5">
    <property type="protein sequence ID" value="ENSMUSP00000021242.5"/>
    <property type="gene ID" value="ENSMUSG00000020872.5"/>
</dbReference>
<dbReference type="GeneID" id="93670"/>
<dbReference type="KEGG" id="mmu:93670"/>
<dbReference type="UCSC" id="uc007lac.1">
    <property type="organism name" value="mouse"/>
</dbReference>
<dbReference type="AGR" id="MGI:1931130"/>
<dbReference type="CTD" id="255061"/>
<dbReference type="MGI" id="MGI:1931130">
    <property type="gene designation" value="Tac4"/>
</dbReference>
<dbReference type="VEuPathDB" id="HostDB:ENSMUSG00000020872"/>
<dbReference type="eggNOG" id="ENOG502TEEE">
    <property type="taxonomic scope" value="Eukaryota"/>
</dbReference>
<dbReference type="GeneTree" id="ENSGT00390000015220"/>
<dbReference type="HOGENOM" id="CLU_133899_0_0_1"/>
<dbReference type="InParanoid" id="Q99N14"/>
<dbReference type="OMA" id="EAESWVT"/>
<dbReference type="OrthoDB" id="9538060at2759"/>
<dbReference type="PhylomeDB" id="Q99N14"/>
<dbReference type="TreeFam" id="TF338519"/>
<dbReference type="BioGRID-ORCS" id="93670">
    <property type="hits" value="7 hits in 76 CRISPR screens"/>
</dbReference>
<dbReference type="PRO" id="PR:Q99N14"/>
<dbReference type="Proteomes" id="UP000000589">
    <property type="component" value="Chromosome 11"/>
</dbReference>
<dbReference type="RNAct" id="Q99N14">
    <property type="molecule type" value="protein"/>
</dbReference>
<dbReference type="Bgee" id="ENSMUSG00000020872">
    <property type="expression patterns" value="Expressed in lip and 24 other cell types or tissues"/>
</dbReference>
<dbReference type="GO" id="GO:0005576">
    <property type="term" value="C:extracellular region"/>
    <property type="evidence" value="ECO:0007669"/>
    <property type="project" value="UniProtKB-SubCell"/>
</dbReference>
<dbReference type="GO" id="GO:0048018">
    <property type="term" value="F:receptor ligand activity"/>
    <property type="evidence" value="ECO:0000314"/>
    <property type="project" value="UniProtKB"/>
</dbReference>
<dbReference type="GO" id="GO:0005102">
    <property type="term" value="F:signaling receptor binding"/>
    <property type="evidence" value="ECO:0000314"/>
    <property type="project" value="MGI"/>
</dbReference>
<dbReference type="GO" id="GO:0031837">
    <property type="term" value="F:substance K receptor binding"/>
    <property type="evidence" value="ECO:0000353"/>
    <property type="project" value="UniProtKB"/>
</dbReference>
<dbReference type="GO" id="GO:0031835">
    <property type="term" value="F:substance P receptor binding"/>
    <property type="evidence" value="ECO:0000353"/>
    <property type="project" value="UniProtKB"/>
</dbReference>
<dbReference type="GO" id="GO:0043303">
    <property type="term" value="P:mast cell degranulation"/>
    <property type="evidence" value="ECO:0007669"/>
    <property type="project" value="UniProtKB-KW"/>
</dbReference>
<dbReference type="GO" id="GO:0007204">
    <property type="term" value="P:positive regulation of cytosolic calcium ion concentration"/>
    <property type="evidence" value="ECO:0000314"/>
    <property type="project" value="UniProtKB"/>
</dbReference>
<dbReference type="GO" id="GO:0046878">
    <property type="term" value="P:positive regulation of saliva secretion"/>
    <property type="evidence" value="ECO:0000314"/>
    <property type="project" value="MGI"/>
</dbReference>
<dbReference type="GO" id="GO:0008217">
    <property type="term" value="P:regulation of blood pressure"/>
    <property type="evidence" value="ECO:0007669"/>
    <property type="project" value="UniProtKB-KW"/>
</dbReference>
<dbReference type="GO" id="GO:0007217">
    <property type="term" value="P:tachykinin receptor signaling pathway"/>
    <property type="evidence" value="ECO:0000314"/>
    <property type="project" value="UniProtKB"/>
</dbReference>
<dbReference type="InterPro" id="IPR013055">
    <property type="entry name" value="Tachy_Neuro_lke_CS"/>
</dbReference>
<dbReference type="PANTHER" id="PTHR11250">
    <property type="entry name" value="TACHYKININ"/>
    <property type="match status" value="1"/>
</dbReference>
<dbReference type="PANTHER" id="PTHR11250:SF2">
    <property type="entry name" value="TACHYKININ-4"/>
    <property type="match status" value="1"/>
</dbReference>
<dbReference type="PROSITE" id="PS00267">
    <property type="entry name" value="TACHYKININ"/>
    <property type="match status" value="1"/>
</dbReference>
<reference evidence="17 19" key="1">
    <citation type="journal article" date="2000" name="Nat. Immunol.">
        <title>Hemokinin is a hematopoietic-specific tachykinin that regulates B lymphopoiesis.</title>
        <authorList>
            <person name="Zhang Y."/>
            <person name="Lu L."/>
            <person name="Furlonger C."/>
            <person name="Wu G.E."/>
            <person name="Paige C.J."/>
        </authorList>
    </citation>
    <scope>NUCLEOTIDE SEQUENCE [MRNA]</scope>
    <scope>FUNCTION</scope>
    <scope>TISSUE SPECIFICITY</scope>
    <scope>AMIDATION AT MET-66</scope>
</reference>
<reference evidence="17 20" key="2">
    <citation type="journal article" date="2003" name="Proc. Natl. Acad. Sci. U.S.A.">
        <title>Characterization of the endokinins: human tachykinins with cardiovascular activity.</title>
        <authorList>
            <person name="Page N.M."/>
            <person name="Bell N.J."/>
            <person name="Gardiner S.M."/>
            <person name="Manyonda I.T."/>
            <person name="Brayley K.J."/>
            <person name="Strange P.G."/>
            <person name="Lowry P.J."/>
        </authorList>
    </citation>
    <scope>NUCLEOTIDE SEQUENCE [MRNA]</scope>
    <scope>TISSUE SPECIFICITY</scope>
    <source>
        <strain evidence="20">CD-1</strain>
    </source>
</reference>
<reference key="3">
    <citation type="journal article" date="2009" name="PLoS Biol.">
        <title>Lineage-specific biology revealed by a finished genome assembly of the mouse.</title>
        <authorList>
            <person name="Church D.M."/>
            <person name="Goodstadt L."/>
            <person name="Hillier L.W."/>
            <person name="Zody M.C."/>
            <person name="Goldstein S."/>
            <person name="She X."/>
            <person name="Bult C.J."/>
            <person name="Agarwala R."/>
            <person name="Cherry J.L."/>
            <person name="DiCuccio M."/>
            <person name="Hlavina W."/>
            <person name="Kapustin Y."/>
            <person name="Meric P."/>
            <person name="Maglott D."/>
            <person name="Birtle Z."/>
            <person name="Marques A.C."/>
            <person name="Graves T."/>
            <person name="Zhou S."/>
            <person name="Teague B."/>
            <person name="Potamousis K."/>
            <person name="Churas C."/>
            <person name="Place M."/>
            <person name="Herschleb J."/>
            <person name="Runnheim R."/>
            <person name="Forrest D."/>
            <person name="Amos-Landgraf J."/>
            <person name="Schwartz D.C."/>
            <person name="Cheng Z."/>
            <person name="Lindblad-Toh K."/>
            <person name="Eichler E.E."/>
            <person name="Ponting C.P."/>
        </authorList>
    </citation>
    <scope>NUCLEOTIDE SEQUENCE [LARGE SCALE GENOMIC DNA]</scope>
    <source>
        <strain>C57BL/6J</strain>
    </source>
</reference>
<reference evidence="18" key="4">
    <citation type="journal article" date="2004" name="Genome Res.">
        <title>The status, quality, and expansion of the NIH full-length cDNA project: the Mammalian Gene Collection (MGC).</title>
        <authorList>
            <consortium name="The MGC Project Team"/>
        </authorList>
    </citation>
    <scope>NUCLEOTIDE SEQUENCE [LARGE SCALE MRNA]</scope>
</reference>
<reference evidence="17" key="5">
    <citation type="journal article" date="2001" name="Nat. Immunol.">
        <title>Hemokinin 1 is a full agonist at the substance P receptor.</title>
        <authorList>
            <person name="Morteau O."/>
            <person name="Lu B."/>
            <person name="Gerard C."/>
            <person name="Gerard N.P."/>
        </authorList>
    </citation>
    <scope>FUNCTION</scope>
</reference>
<reference evidence="17" key="6">
    <citation type="journal article" date="2002" name="Br. J. Pharmacol.">
        <title>Pharmacological profile of the novel mammalian tachykinin, hemokinin 1.</title>
        <authorList>
            <person name="Bellucci F."/>
            <person name="Carini F."/>
            <person name="Catalani C."/>
            <person name="Cucchi P."/>
            <person name="Lecci A."/>
            <person name="Meini S."/>
            <person name="Patacchini R."/>
            <person name="Quartara L."/>
            <person name="Ricci R."/>
            <person name="Tramontana M."/>
            <person name="Giuliani S."/>
            <person name="Maggi C.A."/>
        </authorList>
    </citation>
    <scope>SYNTHESIS</scope>
    <scope>FUNCTION</scope>
</reference>
<reference evidence="17" key="7">
    <citation type="journal article" date="2002" name="Gene">
        <title>Identification, localization and receptor characterization of novel mammalian substance P-like peptides.</title>
        <authorList>
            <person name="Kurtz M.M."/>
            <person name="Wang R."/>
            <person name="Clements M.K."/>
            <person name="Cascieri M.A."/>
            <person name="Austin C.P."/>
            <person name="Cunningham B.R."/>
            <person name="Chicchi G.G."/>
            <person name="Liu Q."/>
        </authorList>
    </citation>
    <scope>TISSUE SPECIFICITY</scope>
</reference>
<reference evidence="17" key="8">
    <citation type="journal article" date="2002" name="Life Sci.">
        <title>Pharmacological profile of hemokinin 1: a novel member of the tachykinin family.</title>
        <authorList>
            <person name="Camarda V."/>
            <person name="Rizzi A."/>
            <person name="Calo G."/>
            <person name="Guerrini R."/>
            <person name="Salvadori S."/>
            <person name="Regoli D."/>
        </authorList>
    </citation>
    <scope>SYNTHESIS</scope>
    <scope>FUNCTION</scope>
</reference>
<reference evidence="17" key="9">
    <citation type="journal article" date="2003" name="Neuropharmacology">
        <title>Centrally administered hemokinin-1 (HK-1), a neurokinin NK1 receptor agonist, produces substance P-like behavioral effects in mice and gerbils.</title>
        <authorList>
            <person name="Duffy R.A."/>
            <person name="Hedrick J.A."/>
            <person name="Randolph G."/>
            <person name="Morgan C.A."/>
            <person name="Cohen-Williams M.E."/>
            <person name="Vassileva G."/>
            <person name="Lachowicz J.E."/>
            <person name="Laverty M."/>
            <person name="Maguire M."/>
            <person name="Shan L.-S."/>
            <person name="Gustafson E."/>
            <person name="Varty G.B."/>
        </authorList>
    </citation>
    <scope>FUNCTION</scope>
    <scope>TISSUE SPECIFICITY</scope>
</reference>
<reference evidence="17" key="10">
    <citation type="journal article" date="2004" name="J. Immunol.">
        <title>Hemokinin has substance P-like function and expression in inflammation.</title>
        <authorList>
            <person name="Metwali A."/>
            <person name="Blum A.M."/>
            <person name="Elliott D.E."/>
            <person name="Setiawan T."/>
            <person name="Weinstock J.V."/>
        </authorList>
    </citation>
    <scope>FUNCTION</scope>
    <scope>TISSUE SPECIFICITY</scope>
</reference>
<reference evidence="17" key="11">
    <citation type="journal article" date="2004" name="J. Neuroimmunol.">
        <title>Expression of hemokinin 1 mRNA by murine dendritic cells.</title>
        <authorList>
            <person name="Nelson D.A."/>
            <person name="Marriott I."/>
            <person name="Bost K.L."/>
        </authorList>
    </citation>
    <scope>TISSUE SPECIFICITY</scope>
</reference>
<reference evidence="17" key="12">
    <citation type="journal article" date="2005" name="Biol. Reprod.">
        <title>Functional and molecular characterization of tachykinins and tachykinin receptors in the mouse uterus.</title>
        <authorList>
            <person name="Patak E."/>
            <person name="Pinto F.M."/>
            <person name="Story M.E."/>
            <person name="Pintado C.O."/>
            <person name="Fleming A."/>
            <person name="Page N.M."/>
            <person name="Pennefather J.N."/>
            <person name="Candenas M.L."/>
        </authorList>
    </citation>
    <scope>TISSUE SPECIFICITY</scope>
</reference>
<reference evidence="17" key="13">
    <citation type="journal article" date="2005" name="Brain Res.">
        <title>Effects and mechanisms of supraspinal administration of rat/mouse hemokinin-1, a mammalian tachykinin peptide, on nociception in mice.</title>
        <authorList>
            <person name="Fu C.-Y."/>
            <person name="Kong Z.-Q."/>
            <person name="Wang K.-R."/>
            <person name="Yang Q."/>
            <person name="Zhai K."/>
            <person name="Chen Q."/>
            <person name="Wang R."/>
        </authorList>
    </citation>
    <scope>SYNTHESIS</scope>
    <scope>FUNCTION</scope>
</reference>
<reference evidence="17" key="14">
    <citation type="journal article" date="2007" name="Eur. J. Pharmacol.">
        <title>Cardiovascular responses to rat/mouse hemokinin-1, a mammalian tachykinin peptide: systemic study in anesthetized rats.</title>
        <authorList>
            <person name="Fu C.-Y."/>
            <person name="Kong Z.-Q."/>
            <person name="Long Y."/>
            <person name="Chen Q."/>
            <person name="Wang R."/>
        </authorList>
    </citation>
    <scope>SYNTHESIS</scope>
    <scope>FUNCTION</scope>
</reference>
<feature type="signal peptide" evidence="2">
    <location>
        <begin position="1"/>
        <end position="16"/>
    </location>
</feature>
<feature type="propeptide" id="PRO_0000320014" evidence="1">
    <location>
        <begin position="17"/>
        <end position="54"/>
    </location>
</feature>
<feature type="peptide" id="PRO_0000320015" description="Hemokinin" evidence="4">
    <location>
        <begin position="56"/>
        <end position="66"/>
    </location>
</feature>
<feature type="propeptide" id="PRO_0000320016" evidence="1">
    <location>
        <begin position="69"/>
        <end position="128"/>
    </location>
</feature>
<feature type="region of interest" description="Disordered" evidence="3">
    <location>
        <begin position="96"/>
        <end position="128"/>
    </location>
</feature>
<feature type="modified residue" description="Methionine amide" evidence="2 16">
    <location>
        <position position="66"/>
    </location>
</feature>